<proteinExistence type="inferred from homology"/>
<evidence type="ECO:0000255" key="1">
    <source>
        <dbReference type="HAMAP-Rule" id="MF_00643"/>
    </source>
</evidence>
<sequence length="39" mass="4424">MTIDRTYPIFTVRWLAVHGLAVPTVSFLGSISAMQFIQR</sequence>
<geneLocation type="chloroplast"/>
<gene>
    <name evidence="1" type="primary">psbF</name>
</gene>
<dbReference type="EMBL" id="AY147554">
    <property type="protein sequence ID" value="AAN32317.1"/>
    <property type="molecule type" value="Genomic_DNA"/>
</dbReference>
<dbReference type="RefSeq" id="YP_009116358.1">
    <property type="nucleotide sequence ID" value="NC_026220.1"/>
</dbReference>
<dbReference type="SMR" id="Q67HN7"/>
<dbReference type="GeneID" id="22909424"/>
<dbReference type="OrthoDB" id="77at2759"/>
<dbReference type="Proteomes" id="UP000515123">
    <property type="component" value="Chloroplast Pltd"/>
</dbReference>
<dbReference type="GO" id="GO:0009535">
    <property type="term" value="C:chloroplast thylakoid membrane"/>
    <property type="evidence" value="ECO:0007669"/>
    <property type="project" value="UniProtKB-SubCell"/>
</dbReference>
<dbReference type="GO" id="GO:0009539">
    <property type="term" value="C:photosystem II reaction center"/>
    <property type="evidence" value="ECO:0007669"/>
    <property type="project" value="InterPro"/>
</dbReference>
<dbReference type="GO" id="GO:0009055">
    <property type="term" value="F:electron transfer activity"/>
    <property type="evidence" value="ECO:0007669"/>
    <property type="project" value="UniProtKB-UniRule"/>
</dbReference>
<dbReference type="GO" id="GO:0020037">
    <property type="term" value="F:heme binding"/>
    <property type="evidence" value="ECO:0007669"/>
    <property type="project" value="InterPro"/>
</dbReference>
<dbReference type="GO" id="GO:0005506">
    <property type="term" value="F:iron ion binding"/>
    <property type="evidence" value="ECO:0007669"/>
    <property type="project" value="UniProtKB-UniRule"/>
</dbReference>
<dbReference type="GO" id="GO:0009767">
    <property type="term" value="P:photosynthetic electron transport chain"/>
    <property type="evidence" value="ECO:0007669"/>
    <property type="project" value="InterPro"/>
</dbReference>
<dbReference type="HAMAP" id="MF_00643">
    <property type="entry name" value="PSII_PsbF"/>
    <property type="match status" value="1"/>
</dbReference>
<dbReference type="InterPro" id="IPR006241">
    <property type="entry name" value="PSII_cyt_b559_bsu"/>
</dbReference>
<dbReference type="InterPro" id="IPR006216">
    <property type="entry name" value="PSII_cyt_b559_CS"/>
</dbReference>
<dbReference type="InterPro" id="IPR013081">
    <property type="entry name" value="PSII_cyt_b559_N"/>
</dbReference>
<dbReference type="NCBIfam" id="TIGR01333">
    <property type="entry name" value="cyt_b559_beta"/>
    <property type="match status" value="1"/>
</dbReference>
<dbReference type="Pfam" id="PF00283">
    <property type="entry name" value="Cytochrom_B559"/>
    <property type="match status" value="1"/>
</dbReference>
<dbReference type="PIRSF" id="PIRSF000037">
    <property type="entry name" value="PsbF"/>
    <property type="match status" value="1"/>
</dbReference>
<dbReference type="SUPFAM" id="SSF161045">
    <property type="entry name" value="Cytochrome b559 subunits"/>
    <property type="match status" value="1"/>
</dbReference>
<dbReference type="PROSITE" id="PS00537">
    <property type="entry name" value="CYTOCHROME_B559"/>
    <property type="match status" value="1"/>
</dbReference>
<accession>Q67HN7</accession>
<comment type="function">
    <text evidence="1">This b-type cytochrome is tightly associated with the reaction center of photosystem II (PSII). PSII is a light-driven water:plastoquinone oxidoreductase that uses light energy to abstract electrons from H(2)O, generating O(2) and a proton gradient subsequently used for ATP formation. It consists of a core antenna complex that captures photons, and an electron transfer chain that converts photonic excitation into a charge separation.</text>
</comment>
<comment type="cofactor">
    <cofactor evidence="1">
        <name>heme b</name>
        <dbReference type="ChEBI" id="CHEBI:60344"/>
    </cofactor>
    <text evidence="1">With its partner (PsbE) binds heme. PSII binds additional chlorophylls, carotenoids and specific lipids.</text>
</comment>
<comment type="subunit">
    <text evidence="1">Heterodimer of an alpha subunit and a beta subunit. PSII is composed of 1 copy each of membrane proteins PsbA, PsbB, PsbC, PsbD, PsbE, PsbF, PsbH, PsbI, PsbJ, PsbK, PsbL, PsbM, PsbT, PsbX, PsbY, PsbZ, Psb30/Ycf12, at least 3 peripheral proteins of the oxygen-evolving complex and a large number of cofactors. It forms dimeric complexes.</text>
</comment>
<comment type="subcellular location">
    <subcellularLocation>
        <location evidence="1">Plastid</location>
        <location evidence="1">Chloroplast thylakoid membrane</location>
        <topology evidence="1">Single-pass membrane protein</topology>
    </subcellularLocation>
</comment>
<comment type="similarity">
    <text evidence="1">Belongs to the PsbE/PsbF family.</text>
</comment>
<reference key="1">
    <citation type="submission" date="2002-09" db="EMBL/GenBank/DDBJ databases">
        <title>Phylogenetic relationships among the major lineages of Asparagales based on a large chloroplast data set.</title>
        <authorList>
            <person name="McPherson M.A."/>
            <person name="Rai H.S."/>
            <person name="Wong W.A."/>
            <person name="Graham S.W."/>
        </authorList>
    </citation>
    <scope>NUCLEOTIDE SEQUENCE [GENOMIC DNA]</scope>
</reference>
<name>PSBF_ANACO</name>
<keyword id="KW-0150">Chloroplast</keyword>
<keyword id="KW-0249">Electron transport</keyword>
<keyword id="KW-0349">Heme</keyword>
<keyword id="KW-0408">Iron</keyword>
<keyword id="KW-0472">Membrane</keyword>
<keyword id="KW-0479">Metal-binding</keyword>
<keyword id="KW-0602">Photosynthesis</keyword>
<keyword id="KW-0604">Photosystem II</keyword>
<keyword id="KW-0934">Plastid</keyword>
<keyword id="KW-0793">Thylakoid</keyword>
<keyword id="KW-0812">Transmembrane</keyword>
<keyword id="KW-1133">Transmembrane helix</keyword>
<keyword id="KW-0813">Transport</keyword>
<protein>
    <recommendedName>
        <fullName evidence="1">Cytochrome b559 subunit beta</fullName>
    </recommendedName>
    <alternativeName>
        <fullName evidence="1">PSII reaction center subunit VI</fullName>
    </alternativeName>
</protein>
<organism>
    <name type="scientific">Ananas comosus</name>
    <name type="common">Pineapple</name>
    <name type="synonym">Ananas ananas</name>
    <dbReference type="NCBI Taxonomy" id="4615"/>
    <lineage>
        <taxon>Eukaryota</taxon>
        <taxon>Viridiplantae</taxon>
        <taxon>Streptophyta</taxon>
        <taxon>Embryophyta</taxon>
        <taxon>Tracheophyta</taxon>
        <taxon>Spermatophyta</taxon>
        <taxon>Magnoliopsida</taxon>
        <taxon>Liliopsida</taxon>
        <taxon>Poales</taxon>
        <taxon>Bromeliaceae</taxon>
        <taxon>Bromelioideae</taxon>
        <taxon>Ananas</taxon>
    </lineage>
</organism>
<feature type="chain" id="PRO_0000200353" description="Cytochrome b559 subunit beta">
    <location>
        <begin position="1"/>
        <end position="39"/>
    </location>
</feature>
<feature type="transmembrane region" description="Helical" evidence="1">
    <location>
        <begin position="14"/>
        <end position="30"/>
    </location>
</feature>
<feature type="binding site" description="axial binding residue" evidence="1">
    <location>
        <position position="18"/>
    </location>
    <ligand>
        <name>heme</name>
        <dbReference type="ChEBI" id="CHEBI:30413"/>
        <note>ligand shared with alpha subunit</note>
    </ligand>
    <ligandPart>
        <name>Fe</name>
        <dbReference type="ChEBI" id="CHEBI:18248"/>
    </ligandPart>
</feature>